<keyword id="KW-0479">Metal-binding</keyword>
<keyword id="KW-0480">Metal-thiolate cluster</keyword>
<keyword id="KW-1185">Reference proteome</keyword>
<protein>
    <recommendedName>
        <fullName>Metallothionein</fullName>
        <shortName>MT</shortName>
    </recommendedName>
</protein>
<comment type="function">
    <text evidence="1">Metallothioneins have a high content of cysteine residues that bind various heavy metals.</text>
</comment>
<comment type="domain">
    <text>Class I metallothioneins contain 2 metal-binding domains: four divalent ions are chelated within cluster A of the alpha domain and are coordinated via cysteinyl thiolate bridges to 11 cysteine ligands. Cluster B, the corresponding region within the beta domain, can ligate three divalent ions to 9 cysteines.</text>
</comment>
<comment type="similarity">
    <text evidence="4">Belongs to the metallothionein superfamily. Type 1 family.</text>
</comment>
<evidence type="ECO:0000250" key="1"/>
<evidence type="ECO:0000250" key="2">
    <source>
        <dbReference type="UniProtKB" id="P02795"/>
    </source>
</evidence>
<evidence type="ECO:0000250" key="3">
    <source>
        <dbReference type="UniProtKB" id="P62339"/>
    </source>
</evidence>
<evidence type="ECO:0000305" key="4"/>
<dbReference type="EMBL" id="U08105">
    <property type="protein sequence ID" value="AAA74418.1"/>
    <property type="molecule type" value="mRNA"/>
</dbReference>
<dbReference type="EMBL" id="X97269">
    <property type="protein sequence ID" value="CAA65924.1"/>
    <property type="molecule type" value="mRNA"/>
</dbReference>
<dbReference type="SMR" id="P51902"/>
<dbReference type="Proteomes" id="UP000694546">
    <property type="component" value="Unplaced"/>
</dbReference>
<dbReference type="GO" id="GO:0046872">
    <property type="term" value="F:metal ion binding"/>
    <property type="evidence" value="ECO:0007669"/>
    <property type="project" value="UniProtKB-KW"/>
</dbReference>
<dbReference type="FunFam" id="4.10.10.10:FF:000001">
    <property type="entry name" value="Metallothionein"/>
    <property type="match status" value="1"/>
</dbReference>
<dbReference type="Gene3D" id="4.10.10.10">
    <property type="entry name" value="Metallothionein Isoform II"/>
    <property type="match status" value="1"/>
</dbReference>
<dbReference type="InterPro" id="IPR017854">
    <property type="entry name" value="Metalthion_dom_sf"/>
</dbReference>
<dbReference type="InterPro" id="IPR023587">
    <property type="entry name" value="Metalthion_dom_sf_vert"/>
</dbReference>
<dbReference type="InterPro" id="IPR000006">
    <property type="entry name" value="Metalthion_vert"/>
</dbReference>
<dbReference type="InterPro" id="IPR018064">
    <property type="entry name" value="Metalthion_vert_metal_BS"/>
</dbReference>
<dbReference type="Pfam" id="PF00131">
    <property type="entry name" value="Metallothio"/>
    <property type="match status" value="1"/>
</dbReference>
<dbReference type="PRINTS" id="PR00860">
    <property type="entry name" value="MTVERTEBRATE"/>
</dbReference>
<dbReference type="SUPFAM" id="SSF57868">
    <property type="entry name" value="Metallothionein"/>
    <property type="match status" value="1"/>
</dbReference>
<dbReference type="PROSITE" id="PS00203">
    <property type="entry name" value="METALLOTHIONEIN_VRT"/>
    <property type="match status" value="1"/>
</dbReference>
<accession>P51902</accession>
<accession>Q92078</accession>
<name>MT_GADMO</name>
<sequence length="60" mass="6106">MDPCDCAKTGTCNCGTSCTCANCSCTKCKKSCCECCPSGCSKCASGCACKDKTCDTNCCQ</sequence>
<reference key="1">
    <citation type="journal article" date="1994" name="Mol. Mar. Biol. Biotechnol.">
        <title>Identification and characterization of metallothionein cDNA from mRNA transcripts induced by starvation in Atlantic cod (Gadus morhua).</title>
        <authorList>
            <person name="McNamara P.T."/>
            <person name="Buckley L.J."/>
        </authorList>
    </citation>
    <scope>NUCLEOTIDE SEQUENCE [MRNA]</scope>
</reference>
<reference key="2">
    <citation type="submission" date="1996-04" db="EMBL/GenBank/DDBJ databases">
        <title>The use of metallothionein genes for determining the phylogenetic and evolutionary relationship between extant teleosts.</title>
        <authorList>
            <person name="Kille P."/>
            <person name="Olsson P.-E."/>
        </authorList>
    </citation>
    <scope>NUCLEOTIDE SEQUENCE [MRNA]</scope>
    <source>
        <tissue>Brain</tissue>
    </source>
</reference>
<gene>
    <name type="primary">mt</name>
</gene>
<feature type="chain" id="PRO_0000197284" description="Metallothionein">
    <location>
        <begin position="1"/>
        <end position="60"/>
    </location>
</feature>
<feature type="region of interest" description="Beta">
    <location>
        <begin position="1"/>
        <end position="28"/>
    </location>
</feature>
<feature type="region of interest" description="Alpha">
    <location>
        <begin position="29"/>
        <end position="60"/>
    </location>
</feature>
<feature type="binding site" evidence="2">
    <location>
        <position position="4"/>
    </location>
    <ligand>
        <name>a divalent metal cation</name>
        <dbReference type="ChEBI" id="CHEBI:60240"/>
        <label>1</label>
        <note>in cluster B</note>
    </ligand>
</feature>
<feature type="binding site" evidence="2">
    <location>
        <position position="6"/>
    </location>
    <ligand>
        <name>a divalent metal cation</name>
        <dbReference type="ChEBI" id="CHEBI:60240"/>
        <label>1</label>
        <note>in cluster B</note>
    </ligand>
</feature>
<feature type="binding site" evidence="2">
    <location>
        <position position="6"/>
    </location>
    <ligand>
        <name>a divalent metal cation</name>
        <dbReference type="ChEBI" id="CHEBI:60240"/>
        <label>2</label>
        <note>in cluster B</note>
    </ligand>
</feature>
<feature type="binding site" evidence="2">
    <location>
        <position position="12"/>
    </location>
    <ligand>
        <name>a divalent metal cation</name>
        <dbReference type="ChEBI" id="CHEBI:60240"/>
        <label>2</label>
        <note>in cluster B</note>
    </ligand>
</feature>
<feature type="binding site" evidence="2">
    <location>
        <position position="14"/>
    </location>
    <ligand>
        <name>a divalent metal cation</name>
        <dbReference type="ChEBI" id="CHEBI:60240"/>
        <label>2</label>
        <note>in cluster B</note>
    </ligand>
</feature>
<feature type="binding site" evidence="2">
    <location>
        <position position="14"/>
    </location>
    <ligand>
        <name>a divalent metal cation</name>
        <dbReference type="ChEBI" id="CHEBI:60240"/>
        <label>3</label>
        <note>in cluster B</note>
    </ligand>
</feature>
<feature type="binding site" evidence="2">
    <location>
        <position position="18"/>
    </location>
    <ligand>
        <name>a divalent metal cation</name>
        <dbReference type="ChEBI" id="CHEBI:60240"/>
        <label>3</label>
        <note>in cluster B</note>
    </ligand>
</feature>
<feature type="binding site" evidence="2">
    <location>
        <position position="20"/>
    </location>
    <ligand>
        <name>a divalent metal cation</name>
        <dbReference type="ChEBI" id="CHEBI:60240"/>
        <label>1</label>
        <note>in cluster B</note>
    </ligand>
</feature>
<feature type="binding site" evidence="2">
    <location>
        <position position="23"/>
    </location>
    <ligand>
        <name>a divalent metal cation</name>
        <dbReference type="ChEBI" id="CHEBI:60240"/>
        <label>1</label>
        <note>in cluster B</note>
    </ligand>
</feature>
<feature type="binding site" evidence="2">
    <location>
        <position position="23"/>
    </location>
    <ligand>
        <name>a divalent metal cation</name>
        <dbReference type="ChEBI" id="CHEBI:60240"/>
        <label>3</label>
        <note>in cluster B</note>
    </ligand>
</feature>
<feature type="binding site" evidence="2">
    <location>
        <position position="25"/>
    </location>
    <ligand>
        <name>a divalent metal cation</name>
        <dbReference type="ChEBI" id="CHEBI:60240"/>
        <label>2</label>
        <note>in cluster B</note>
    </ligand>
</feature>
<feature type="binding site" evidence="2">
    <location>
        <position position="28"/>
    </location>
    <ligand>
        <name>a divalent metal cation</name>
        <dbReference type="ChEBI" id="CHEBI:60240"/>
        <label>3</label>
        <note>in cluster B</note>
    </ligand>
</feature>
<feature type="binding site" evidence="2">
    <location>
        <position position="32"/>
    </location>
    <ligand>
        <name>a divalent metal cation</name>
        <dbReference type="ChEBI" id="CHEBI:60240"/>
        <label>4</label>
        <note>in cluster A</note>
    </ligand>
</feature>
<feature type="binding site" evidence="2">
    <location>
        <position position="33"/>
    </location>
    <ligand>
        <name>a divalent metal cation</name>
        <dbReference type="ChEBI" id="CHEBI:60240"/>
        <label>4</label>
        <note>in cluster A</note>
    </ligand>
</feature>
<feature type="binding site" evidence="2">
    <location>
        <position position="33"/>
    </location>
    <ligand>
        <name>a divalent metal cation</name>
        <dbReference type="ChEBI" id="CHEBI:60240"/>
        <label>5</label>
        <note>in cluster A</note>
    </ligand>
</feature>
<feature type="binding site" evidence="2">
    <location>
        <position position="35"/>
    </location>
    <ligand>
        <name>a divalent metal cation</name>
        <dbReference type="ChEBI" id="CHEBI:60240"/>
        <label>5</label>
        <note>in cluster A</note>
    </ligand>
</feature>
<feature type="binding site" evidence="2">
    <location>
        <position position="36"/>
    </location>
    <ligand>
        <name>a divalent metal cation</name>
        <dbReference type="ChEBI" id="CHEBI:60240"/>
        <label>5</label>
        <note>in cluster A</note>
    </ligand>
</feature>
<feature type="binding site" evidence="2">
    <location>
        <position position="36"/>
    </location>
    <ligand>
        <name>a divalent metal cation</name>
        <dbReference type="ChEBI" id="CHEBI:60240"/>
        <label>6</label>
        <note>in cluster A</note>
    </ligand>
</feature>
<feature type="binding site" evidence="2">
    <location>
        <position position="40"/>
    </location>
    <ligand>
        <name>a divalent metal cation</name>
        <dbReference type="ChEBI" id="CHEBI:60240"/>
        <label>6</label>
        <note>in cluster A</note>
    </ligand>
</feature>
<feature type="binding site" evidence="2">
    <location>
        <position position="43"/>
    </location>
    <ligand>
        <name>a divalent metal cation</name>
        <dbReference type="ChEBI" id="CHEBI:60240"/>
        <label>4</label>
        <note>in cluster A</note>
    </ligand>
</feature>
<feature type="binding site" evidence="2">
    <location>
        <position position="43"/>
    </location>
    <ligand>
        <name>a divalent metal cation</name>
        <dbReference type="ChEBI" id="CHEBI:60240"/>
        <label>6</label>
        <note>in cluster A</note>
    </ligand>
</feature>
<feature type="binding site" evidence="2">
    <location>
        <position position="47"/>
    </location>
    <ligand>
        <name>a divalent metal cation</name>
        <dbReference type="ChEBI" id="CHEBI:60240"/>
        <label>4</label>
        <note>in cluster A</note>
    </ligand>
</feature>
<feature type="binding site" evidence="2">
    <location>
        <position position="49"/>
    </location>
    <ligand>
        <name>a divalent metal cation</name>
        <dbReference type="ChEBI" id="CHEBI:60240"/>
        <label>5</label>
        <note>in cluster A</note>
    </ligand>
</feature>
<feature type="binding site" evidence="2">
    <location>
        <position position="49"/>
    </location>
    <ligand>
        <name>a divalent metal cation</name>
        <dbReference type="ChEBI" id="CHEBI:60240"/>
        <label>7</label>
        <note>in cluster A</note>
    </ligand>
</feature>
<feature type="binding site" evidence="3">
    <location>
        <position position="54"/>
    </location>
    <ligand>
        <name>a divalent metal cation</name>
        <dbReference type="ChEBI" id="CHEBI:60240"/>
        <label>7</label>
        <note>in cluster A</note>
    </ligand>
</feature>
<feature type="binding site" evidence="2">
    <location>
        <position position="58"/>
    </location>
    <ligand>
        <name>a divalent metal cation</name>
        <dbReference type="ChEBI" id="CHEBI:60240"/>
        <label>7</label>
        <note>in cluster A</note>
    </ligand>
</feature>
<feature type="binding site" evidence="2">
    <location>
        <position position="59"/>
    </location>
    <ligand>
        <name>a divalent metal cation</name>
        <dbReference type="ChEBI" id="CHEBI:60240"/>
        <label>6</label>
        <note>in cluster A</note>
    </ligand>
</feature>
<feature type="binding site" evidence="2">
    <location>
        <position position="59"/>
    </location>
    <ligand>
        <name>a divalent metal cation</name>
        <dbReference type="ChEBI" id="CHEBI:60240"/>
        <label>7</label>
        <note>in cluster A</note>
    </ligand>
</feature>
<feature type="sequence conflict" description="In Ref. 2." evidence="4" ref="2">
    <original>D</original>
    <variation>E</variation>
    <location>
        <position position="5"/>
    </location>
</feature>
<feature type="sequence conflict" description="In Ref. 2." evidence="4" ref="2">
    <original>A</original>
    <variation>S</variation>
    <location>
        <position position="7"/>
    </location>
</feature>
<feature type="sequence conflict" description="In Ref. 2; CAA65924." evidence="4" ref="2">
    <original>T</original>
    <variation>S</variation>
    <location>
        <position position="11"/>
    </location>
</feature>
<feature type="sequence conflict" description="In Ref. 2; CAA65924." evidence="4" ref="2">
    <original>A</original>
    <variation>V</variation>
    <location>
        <position position="48"/>
    </location>
</feature>
<organism>
    <name type="scientific">Gadus morhua</name>
    <name type="common">Atlantic cod</name>
    <dbReference type="NCBI Taxonomy" id="8049"/>
    <lineage>
        <taxon>Eukaryota</taxon>
        <taxon>Metazoa</taxon>
        <taxon>Chordata</taxon>
        <taxon>Craniata</taxon>
        <taxon>Vertebrata</taxon>
        <taxon>Euteleostomi</taxon>
        <taxon>Actinopterygii</taxon>
        <taxon>Neopterygii</taxon>
        <taxon>Teleostei</taxon>
        <taxon>Neoteleostei</taxon>
        <taxon>Acanthomorphata</taxon>
        <taxon>Zeiogadaria</taxon>
        <taxon>Gadariae</taxon>
        <taxon>Gadiformes</taxon>
        <taxon>Gadoidei</taxon>
        <taxon>Gadidae</taxon>
        <taxon>Gadus</taxon>
    </lineage>
</organism>
<proteinExistence type="inferred from homology"/>